<gene>
    <name type="primary">Mag</name>
</gene>
<proteinExistence type="evidence at protein level"/>
<evidence type="ECO:0000250" key="1">
    <source>
        <dbReference type="UniProtKB" id="P07722"/>
    </source>
</evidence>
<evidence type="ECO:0000255" key="2"/>
<evidence type="ECO:0000255" key="3">
    <source>
        <dbReference type="PROSITE-ProRule" id="PRU00114"/>
    </source>
</evidence>
<evidence type="ECO:0000269" key="4">
    <source>
    </source>
</evidence>
<evidence type="ECO:0000269" key="5">
    <source>
    </source>
</evidence>
<evidence type="ECO:0000269" key="6">
    <source>
    </source>
</evidence>
<evidence type="ECO:0000269" key="7">
    <source>
    </source>
</evidence>
<evidence type="ECO:0000269" key="8">
    <source>
    </source>
</evidence>
<evidence type="ECO:0000269" key="9">
    <source>
    </source>
</evidence>
<evidence type="ECO:0000269" key="10">
    <source>
    </source>
</evidence>
<evidence type="ECO:0000269" key="11">
    <source>
    </source>
</evidence>
<evidence type="ECO:0000269" key="12">
    <source>
    </source>
</evidence>
<evidence type="ECO:0000269" key="13">
    <source>
    </source>
</evidence>
<evidence type="ECO:0000269" key="14">
    <source>
    </source>
</evidence>
<evidence type="ECO:0000269" key="15">
    <source>
    </source>
</evidence>
<evidence type="ECO:0000269" key="16">
    <source>
    </source>
</evidence>
<evidence type="ECO:0000269" key="17">
    <source>
    </source>
</evidence>
<evidence type="ECO:0000269" key="18">
    <source>
    </source>
</evidence>
<evidence type="ECO:0000269" key="19">
    <source>
    </source>
</evidence>
<evidence type="ECO:0000269" key="20">
    <source>
    </source>
</evidence>
<evidence type="ECO:0000305" key="21"/>
<evidence type="ECO:0000312" key="22">
    <source>
        <dbReference type="Proteomes" id="UP000000589"/>
    </source>
</evidence>
<evidence type="ECO:0007744" key="23">
    <source>
    </source>
</evidence>
<evidence type="ECO:0007829" key="24">
    <source>
        <dbReference type="PDB" id="5LFR"/>
    </source>
</evidence>
<evidence type="ECO:0007829" key="25">
    <source>
        <dbReference type="PDB" id="5LFV"/>
    </source>
</evidence>
<evidence type="ECO:0007829" key="26">
    <source>
        <dbReference type="PDB" id="6GZL"/>
    </source>
</evidence>
<name>MAG_MOUSE</name>
<sequence>MIFLATLPLFWIMISASRGGHWGAWMPSTISAFEGTCVSIPCRFDFPDELRPAVVHGVWYFNSPYPKNYPPVVFKSRTQVVHESFQGRSRLLGDLGLRNCTLLLSTLSPELGGKYYFRGDLGGYNQYTFSEHSVLDIVNTPNIVVPPEVVAGTEVEVSCMVPDNCPELRPELSWLGHEGLGEPTVLGRLREDEGTWVQVSLLHFVPTREANGHRLGCQAAFPNTTLQFEGYASLDVKYPPVIVEMNSSVEAIEGSHVSLLCGADSNPPPLLTWMRDGMVLREAVAKSLYLDLEEVTPGEDGVYACLAENAYGQDNRTVELSVMYAPWKPTVNGTVVAVEGETVSILCSTQSNPDPILTIFKEKQILATVIYESQLQLELPAVTPEDDGEYWCVAENQYGQRATAFNLSVEFAPIILLESHCAAARDTVQCLCVVKSNPEPSVAFELPSRNVTVNETEREFVYSERSGLLLTSILTIRGQAQAPPRVICTSRNLYGTQSLELPFQGAHRLMWAKIGPVGAVVAFAILIAIVCYITQTRRKKNVTESSSFSGGDNPHVLYSPEFRISGAPDKYESEKQRLGSERRLLGLRGESPELDLSYSHSDLGKRPTKDSYTLTEELAEYAEIRVK</sequence>
<feature type="signal peptide">
    <location>
        <begin position="1"/>
        <end position="19"/>
    </location>
</feature>
<feature type="chain" id="PRO_0000014857" description="Myelin-associated glycoprotein">
    <location>
        <begin position="20"/>
        <end position="627"/>
    </location>
</feature>
<feature type="topological domain" description="Extracellular" evidence="2">
    <location>
        <begin position="20"/>
        <end position="516"/>
    </location>
</feature>
<feature type="transmembrane region" description="Helical" evidence="2">
    <location>
        <begin position="517"/>
        <end position="536"/>
    </location>
</feature>
<feature type="topological domain" description="Cytoplasmic" evidence="2">
    <location>
        <begin position="537"/>
        <end position="627"/>
    </location>
</feature>
<feature type="domain" description="Ig-like V-type">
    <location>
        <begin position="22"/>
        <end position="120"/>
    </location>
</feature>
<feature type="domain" description="Ig-like C2-type 1">
    <location>
        <begin position="139"/>
        <end position="237"/>
    </location>
</feature>
<feature type="domain" description="Ig-like C2-type 2">
    <location>
        <begin position="241"/>
        <end position="325"/>
    </location>
</feature>
<feature type="domain" description="Ig-like C2-type 3">
    <location>
        <begin position="327"/>
        <end position="412"/>
    </location>
</feature>
<feature type="domain" description="Ig-like C2-type 4">
    <location>
        <begin position="413"/>
        <end position="508"/>
    </location>
</feature>
<feature type="region of interest" description="Interaction with RTN4R and RTN4RL2" evidence="1">
    <location>
        <begin position="20"/>
        <end position="325"/>
    </location>
</feature>
<feature type="region of interest" description="Required for normal axon myelination in the central nervous system" evidence="20">
    <location>
        <begin position="578"/>
        <end position="627"/>
    </location>
</feature>
<feature type="binding site" evidence="14">
    <location>
        <begin position="65"/>
        <end position="67"/>
    </location>
    <ligand>
        <name>a ganglioside GT1b (d18:1(4E))</name>
        <dbReference type="ChEBI" id="CHEBI:78452"/>
    </ligand>
</feature>
<feature type="binding site" evidence="14">
    <location>
        <position position="118"/>
    </location>
    <ligand>
        <name>a ganglioside GT1b (d18:1(4E))</name>
        <dbReference type="ChEBI" id="CHEBI:78452"/>
    </ligand>
</feature>
<feature type="binding site" evidence="14">
    <location>
        <begin position="124"/>
        <end position="128"/>
    </location>
    <ligand>
        <name>a ganglioside GT1b (d18:1(4E))</name>
        <dbReference type="ChEBI" id="CHEBI:78452"/>
    </ligand>
</feature>
<feature type="modified residue" description="Phosphoserine" evidence="1">
    <location>
        <position position="545"/>
    </location>
</feature>
<feature type="modified residue" description="Phosphoserine" evidence="1">
    <location>
        <position position="547"/>
    </location>
</feature>
<feature type="modified residue" description="Phosphoserine" evidence="1">
    <location>
        <position position="549"/>
    </location>
</feature>
<feature type="modified residue" description="Phosphoserine" evidence="23">
    <location>
        <position position="591"/>
    </location>
</feature>
<feature type="lipid moiety-binding region" description="S-palmitoyl cysteine" evidence="1">
    <location>
        <position position="531"/>
    </location>
</feature>
<feature type="glycosylation site" description="C-linked (Man) tryptophan" evidence="14">
    <location>
        <position position="22"/>
    </location>
</feature>
<feature type="glycosylation site" description="N-linked (GlcNAc...) asparagine" evidence="14">
    <location>
        <position position="99"/>
    </location>
</feature>
<feature type="glycosylation site" description="N-linked (GlcNAc...) asparagine" evidence="14">
    <location>
        <position position="223"/>
    </location>
</feature>
<feature type="glycosylation site" description="N-linked (GlcNAc...) asparagine" evidence="14">
    <location>
        <position position="246"/>
    </location>
</feature>
<feature type="glycosylation site" description="N-linked (GlcNAc...) asparagine" evidence="14">
    <location>
        <position position="315"/>
    </location>
</feature>
<feature type="glycosylation site" description="N-linked (GlcNAc...) asparagine" evidence="14">
    <location>
        <position position="332"/>
    </location>
</feature>
<feature type="glycosylation site" description="N-linked (GlcNAc...) asparagine" evidence="14">
    <location>
        <position position="406"/>
    </location>
</feature>
<feature type="glycosylation site" description="N-linked (GlcNAc...) asparagine" evidence="14">
    <location>
        <position position="450"/>
    </location>
</feature>
<feature type="glycosylation site" description="N-linked (GlcNAc...) asparagine" evidence="14">
    <location>
        <position position="454"/>
    </location>
</feature>
<feature type="disulfide bond" evidence="3 14">
    <location>
        <begin position="37"/>
        <end position="165"/>
    </location>
</feature>
<feature type="disulfide bond" evidence="3 14">
    <location>
        <begin position="42"/>
        <end position="100"/>
    </location>
</feature>
<feature type="disulfide bond" evidence="3 14">
    <location>
        <begin position="159"/>
        <end position="217"/>
    </location>
</feature>
<feature type="disulfide bond" evidence="3 14">
    <location>
        <begin position="261"/>
        <end position="305"/>
    </location>
</feature>
<feature type="disulfide bond" evidence="3 14">
    <location>
        <begin position="347"/>
        <end position="392"/>
    </location>
</feature>
<feature type="disulfide bond" evidence="3 14">
    <location>
        <begin position="421"/>
        <end position="430"/>
    </location>
</feature>
<feature type="disulfide bond" evidence="3 14">
    <location>
        <begin position="432"/>
        <end position="488"/>
    </location>
</feature>
<feature type="splice variant" id="VSP_002527" description="In isoform S-MAG." evidence="21">
    <original>EKQRLGSER</original>
    <variation>REVSTRDCH</variation>
    <location>
        <begin position="574"/>
        <end position="582"/>
    </location>
</feature>
<feature type="splice variant" id="VSP_002528" description="In isoform S-MAG." evidence="21">
    <location>
        <begin position="583"/>
        <end position="627"/>
    </location>
</feature>
<feature type="mutagenesis site" description="Abolishes C-linked mannosylation." evidence="14">
    <original>W</original>
    <variation>Q</variation>
    <location>
        <position position="25"/>
    </location>
</feature>
<feature type="mutagenesis site" description="Decreases ganglioside binding." evidence="14">
    <original>Y</original>
    <variation>A</variation>
    <location>
        <position position="65"/>
    </location>
</feature>
<feature type="mutagenesis site" description="Abolishes protection against axon degeneration." evidence="10">
    <original>RGD</original>
    <variation>KGE</variation>
    <location>
        <begin position="118"/>
        <end position="120"/>
    </location>
</feature>
<feature type="mutagenesis site" description="Abolishes ganglioside binding." evidence="14">
    <original>R</original>
    <variation>A</variation>
    <location>
        <position position="118"/>
    </location>
</feature>
<feature type="mutagenesis site" description="Abolishes ganglioside binding." evidence="14">
    <original>Y</original>
    <variation>A</variation>
    <location>
        <position position="127"/>
    </location>
</feature>
<feature type="mutagenesis site" description="Abolishes ganglioside binding." evidence="14">
    <original>T</original>
    <variation>A</variation>
    <location>
        <position position="128"/>
    </location>
</feature>
<feature type="mutagenesis site" description="Increases homodimerization." evidence="14">
    <original>N</original>
    <variation>Q</variation>
    <location>
        <position position="406"/>
    </location>
</feature>
<feature type="mutagenesis site" description="Abolishes homodimerization." evidence="14">
    <original>I</original>
    <variation>E</variation>
    <location>
        <position position="473"/>
    </location>
</feature>
<feature type="strand" evidence="24">
    <location>
        <begin position="22"/>
        <end position="25"/>
    </location>
</feature>
<feature type="strand" evidence="24">
    <location>
        <begin position="28"/>
        <end position="33"/>
    </location>
</feature>
<feature type="strand" evidence="24">
    <location>
        <begin position="38"/>
        <end position="40"/>
    </location>
</feature>
<feature type="strand" evidence="24">
    <location>
        <begin position="43"/>
        <end position="45"/>
    </location>
</feature>
<feature type="helix" evidence="25">
    <location>
        <begin position="48"/>
        <end position="50"/>
    </location>
</feature>
<feature type="strand" evidence="24">
    <location>
        <begin position="56"/>
        <end position="62"/>
    </location>
</feature>
<feature type="strand" evidence="24">
    <location>
        <begin position="72"/>
        <end position="75"/>
    </location>
</feature>
<feature type="turn" evidence="24">
    <location>
        <begin position="76"/>
        <end position="78"/>
    </location>
</feature>
<feature type="helix" evidence="24">
    <location>
        <begin position="83"/>
        <end position="85"/>
    </location>
</feature>
<feature type="turn" evidence="24">
    <location>
        <begin position="86"/>
        <end position="88"/>
    </location>
</feature>
<feature type="strand" evidence="24">
    <location>
        <begin position="89"/>
        <end position="91"/>
    </location>
</feature>
<feature type="helix" evidence="24">
    <location>
        <begin position="95"/>
        <end position="97"/>
    </location>
</feature>
<feature type="strand" evidence="24">
    <location>
        <begin position="102"/>
        <end position="104"/>
    </location>
</feature>
<feature type="helix" evidence="24">
    <location>
        <begin position="109"/>
        <end position="111"/>
    </location>
</feature>
<feature type="strand" evidence="24">
    <location>
        <begin position="113"/>
        <end position="120"/>
    </location>
</feature>
<feature type="strand" evidence="24">
    <location>
        <begin position="126"/>
        <end position="128"/>
    </location>
</feature>
<feature type="strand" evidence="24">
    <location>
        <begin position="133"/>
        <end position="140"/>
    </location>
</feature>
<feature type="strand" evidence="24">
    <location>
        <begin position="142"/>
        <end position="144"/>
    </location>
</feature>
<feature type="strand" evidence="24">
    <location>
        <begin position="155"/>
        <end position="162"/>
    </location>
</feature>
<feature type="strand" evidence="24">
    <location>
        <begin position="171"/>
        <end position="176"/>
    </location>
</feature>
<feature type="helix" evidence="24">
    <location>
        <begin position="178"/>
        <end position="180"/>
    </location>
</feature>
<feature type="strand" evidence="24">
    <location>
        <begin position="184"/>
        <end position="190"/>
    </location>
</feature>
<feature type="helix" evidence="24">
    <location>
        <begin position="192"/>
        <end position="194"/>
    </location>
</feature>
<feature type="strand" evidence="24">
    <location>
        <begin position="196"/>
        <end position="204"/>
    </location>
</feature>
<feature type="helix" evidence="24">
    <location>
        <begin position="208"/>
        <end position="210"/>
    </location>
</feature>
<feature type="strand" evidence="24">
    <location>
        <begin position="214"/>
        <end position="220"/>
    </location>
</feature>
<feature type="strand" evidence="24">
    <location>
        <begin position="227"/>
        <end position="233"/>
    </location>
</feature>
<feature type="strand" evidence="24">
    <location>
        <begin position="236"/>
        <end position="245"/>
    </location>
</feature>
<feature type="strand" evidence="24">
    <location>
        <begin position="248"/>
        <end position="252"/>
    </location>
</feature>
<feature type="strand" evidence="24">
    <location>
        <begin position="257"/>
        <end position="267"/>
    </location>
</feature>
<feature type="strand" evidence="24">
    <location>
        <begin position="270"/>
        <end position="275"/>
    </location>
</feature>
<feature type="strand" evidence="24">
    <location>
        <begin position="278"/>
        <end position="292"/>
    </location>
</feature>
<feature type="helix" evidence="24">
    <location>
        <begin position="297"/>
        <end position="299"/>
    </location>
</feature>
<feature type="strand" evidence="24">
    <location>
        <begin position="301"/>
        <end position="309"/>
    </location>
</feature>
<feature type="strand" evidence="24">
    <location>
        <begin position="312"/>
        <end position="324"/>
    </location>
</feature>
<feature type="strand" evidence="26">
    <location>
        <begin position="608"/>
        <end position="614"/>
    </location>
</feature>
<dbReference type="EMBL" id="M31811">
    <property type="protein sequence ID" value="AAA39487.1"/>
    <property type="molecule type" value="mRNA"/>
</dbReference>
<dbReference type="EMBL" id="M74793">
    <property type="protein sequence ID" value="AAA91743.1"/>
    <property type="molecule type" value="Genomic_DNA"/>
</dbReference>
<dbReference type="EMBL" id="M74783">
    <property type="protein sequence ID" value="AAA91743.1"/>
    <property type="status" value="JOINED"/>
    <property type="molecule type" value="Genomic_DNA"/>
</dbReference>
<dbReference type="EMBL" id="M74784">
    <property type="protein sequence ID" value="AAA91743.1"/>
    <property type="status" value="JOINED"/>
    <property type="molecule type" value="Genomic_DNA"/>
</dbReference>
<dbReference type="EMBL" id="M74785">
    <property type="protein sequence ID" value="AAA91743.1"/>
    <property type="status" value="JOINED"/>
    <property type="molecule type" value="Genomic_DNA"/>
</dbReference>
<dbReference type="EMBL" id="M74786">
    <property type="protein sequence ID" value="AAA91743.1"/>
    <property type="status" value="JOINED"/>
    <property type="molecule type" value="Genomic_DNA"/>
</dbReference>
<dbReference type="EMBL" id="M74787">
    <property type="protein sequence ID" value="AAA91743.1"/>
    <property type="status" value="JOINED"/>
    <property type="molecule type" value="Genomic_DNA"/>
</dbReference>
<dbReference type="EMBL" id="M74788">
    <property type="protein sequence ID" value="AAA91743.1"/>
    <property type="status" value="JOINED"/>
    <property type="molecule type" value="Genomic_DNA"/>
</dbReference>
<dbReference type="EMBL" id="M74790">
    <property type="protein sequence ID" value="AAA91743.1"/>
    <property type="status" value="JOINED"/>
    <property type="molecule type" value="Genomic_DNA"/>
</dbReference>
<dbReference type="EMBL" id="M74791">
    <property type="protein sequence ID" value="AAA91743.1"/>
    <property type="status" value="JOINED"/>
    <property type="molecule type" value="Genomic_DNA"/>
</dbReference>
<dbReference type="EMBL" id="AC165340">
    <property type="status" value="NOT_ANNOTATED_CDS"/>
    <property type="molecule type" value="Genomic_DNA"/>
</dbReference>
<dbReference type="CCDS" id="CCDS21115.1">
    <molecule id="P20917-2"/>
</dbReference>
<dbReference type="CCDS" id="CCDS90207.1">
    <molecule id="P20917-1"/>
</dbReference>
<dbReference type="PIR" id="B33785">
    <property type="entry name" value="B33785"/>
</dbReference>
<dbReference type="RefSeq" id="NP_001333013.1">
    <molecule id="P20917-1"/>
    <property type="nucleotide sequence ID" value="NM_001346084.2"/>
</dbReference>
<dbReference type="RefSeq" id="NP_001333014.1">
    <molecule id="P20917-1"/>
    <property type="nucleotide sequence ID" value="NM_001346085.2"/>
</dbReference>
<dbReference type="RefSeq" id="NP_001333015.1">
    <molecule id="P20917-2"/>
    <property type="nucleotide sequence ID" value="NM_001346086.2"/>
</dbReference>
<dbReference type="RefSeq" id="NP_001333016.1">
    <molecule id="P20917-2"/>
    <property type="nucleotide sequence ID" value="NM_001346087.2"/>
</dbReference>
<dbReference type="RefSeq" id="NP_001333017.1">
    <molecule id="P20917-2"/>
    <property type="nucleotide sequence ID" value="NM_001346088.2"/>
</dbReference>
<dbReference type="RefSeq" id="NP_001356191.1">
    <molecule id="P20917-1"/>
    <property type="nucleotide sequence ID" value="NM_001369262.1"/>
</dbReference>
<dbReference type="RefSeq" id="NP_001403777.1">
    <molecule id="P20917-1"/>
    <property type="nucleotide sequence ID" value="NM_001416848.1"/>
</dbReference>
<dbReference type="RefSeq" id="NP_034888.1">
    <molecule id="P20917-2"/>
    <property type="nucleotide sequence ID" value="NM_010758.4"/>
</dbReference>
<dbReference type="RefSeq" id="XP_006539653.1">
    <property type="nucleotide sequence ID" value="XM_006539590.2"/>
</dbReference>
<dbReference type="RefSeq" id="XP_006539654.1">
    <property type="nucleotide sequence ID" value="XM_006539591.3"/>
</dbReference>
<dbReference type="RefSeq" id="XP_011248740.1">
    <property type="nucleotide sequence ID" value="XM_011250438.2"/>
</dbReference>
<dbReference type="RefSeq" id="XP_011248741.1">
    <molecule id="P20917-1"/>
    <property type="nucleotide sequence ID" value="XM_011250439.3"/>
</dbReference>
<dbReference type="RefSeq" id="XP_011248742.1">
    <molecule id="P20917-1"/>
    <property type="nucleotide sequence ID" value="XM_011250440.3"/>
</dbReference>
<dbReference type="RefSeq" id="XP_011248743.1">
    <property type="nucleotide sequence ID" value="XM_011250441.2"/>
</dbReference>
<dbReference type="RefSeq" id="XP_017177496.1">
    <property type="nucleotide sequence ID" value="XM_017322007.1"/>
</dbReference>
<dbReference type="RefSeq" id="XP_017177497.1">
    <property type="nucleotide sequence ID" value="XM_017322008.1"/>
</dbReference>
<dbReference type="RefSeq" id="XP_030098049.1">
    <molecule id="P20917-2"/>
    <property type="nucleotide sequence ID" value="XM_030242189.2"/>
</dbReference>
<dbReference type="RefSeq" id="XP_036008618.1">
    <molecule id="P20917-1"/>
    <property type="nucleotide sequence ID" value="XM_036152725.1"/>
</dbReference>
<dbReference type="PDB" id="5LF5">
    <property type="method" value="X-ray"/>
    <property type="resolution" value="3.80 A"/>
    <property type="chains" value="A=20-508"/>
</dbReference>
<dbReference type="PDB" id="5LFR">
    <property type="method" value="X-ray"/>
    <property type="resolution" value="2.12 A"/>
    <property type="chains" value="A/B=20-325"/>
</dbReference>
<dbReference type="PDB" id="5LFU">
    <property type="method" value="X-ray"/>
    <property type="resolution" value="4.30 A"/>
    <property type="chains" value="A=20-508"/>
</dbReference>
<dbReference type="PDB" id="5LFV">
    <property type="method" value="X-ray"/>
    <property type="resolution" value="2.30 A"/>
    <property type="chains" value="A/B=20-325"/>
</dbReference>
<dbReference type="PDB" id="6GZJ">
    <property type="method" value="X-ray"/>
    <property type="resolution" value="1.98 A"/>
    <property type="chains" value="B=573-627"/>
</dbReference>
<dbReference type="PDB" id="6GZL">
    <property type="method" value="X-ray"/>
    <property type="resolution" value="1.95 A"/>
    <property type="chains" value="B=605-621"/>
</dbReference>
<dbReference type="PDBsum" id="5LF5"/>
<dbReference type="PDBsum" id="5LFR"/>
<dbReference type="PDBsum" id="5LFU"/>
<dbReference type="PDBsum" id="5LFV"/>
<dbReference type="PDBsum" id="6GZJ"/>
<dbReference type="PDBsum" id="6GZL"/>
<dbReference type="SASBDB" id="P20917"/>
<dbReference type="SMR" id="P20917"/>
<dbReference type="BioGRID" id="201285">
    <property type="interactions" value="9"/>
</dbReference>
<dbReference type="FunCoup" id="P20917">
    <property type="interactions" value="235"/>
</dbReference>
<dbReference type="IntAct" id="P20917">
    <property type="interactions" value="2"/>
</dbReference>
<dbReference type="MINT" id="P20917"/>
<dbReference type="STRING" id="10090.ENSMUSP00000139564"/>
<dbReference type="BindingDB" id="P20917"/>
<dbReference type="ChEMBL" id="CHEMBL1250416"/>
<dbReference type="UniLectin" id="P20917"/>
<dbReference type="GlyConnect" id="2446">
    <molecule id="P20917-2"/>
    <property type="glycosylation" value="2 N-Linked glycans (1 site)"/>
</dbReference>
<dbReference type="GlyConnect" id="2519">
    <property type="glycosylation" value="13 N-Linked glycans (1 site)"/>
</dbReference>
<dbReference type="GlyCosmos" id="P20917">
    <property type="glycosylation" value="9 sites, 13 glycans"/>
</dbReference>
<dbReference type="GlyGen" id="P20917">
    <property type="glycosylation" value="11 sites, 17 N-linked glycans (5 sites), 1 O-linked glycan (1 site)"/>
</dbReference>
<dbReference type="iPTMnet" id="P20917"/>
<dbReference type="PhosphoSitePlus" id="P20917"/>
<dbReference type="SwissPalm" id="P20917"/>
<dbReference type="PaxDb" id="10090-ENSMUSP00000139881"/>
<dbReference type="PeptideAtlas" id="P20917"/>
<dbReference type="ProteomicsDB" id="287299">
    <molecule id="P20917-1"/>
</dbReference>
<dbReference type="ProteomicsDB" id="287300">
    <molecule id="P20917-2"/>
</dbReference>
<dbReference type="ProteomicsDB" id="312561"/>
<dbReference type="ABCD" id="P20917">
    <property type="antibodies" value="19 sequenced antibodies"/>
</dbReference>
<dbReference type="Antibodypedia" id="1364">
    <property type="antibodies" value="412 antibodies from 40 providers"/>
</dbReference>
<dbReference type="DNASU" id="17136"/>
<dbReference type="Ensembl" id="ENSMUST00000040548.14">
    <molecule id="P20917-2"/>
    <property type="protein sequence ID" value="ENSMUSP00000041464.8"/>
    <property type="gene ID" value="ENSMUSG00000036634.16"/>
</dbReference>
<dbReference type="Ensembl" id="ENSMUST00000187137.7">
    <molecule id="P20917-2"/>
    <property type="protein sequence ID" value="ENSMUSP00000139564.2"/>
    <property type="gene ID" value="ENSMUSG00000036634.16"/>
</dbReference>
<dbReference type="Ensembl" id="ENSMUST00000191081.7">
    <molecule id="P20917-1"/>
    <property type="protein sequence ID" value="ENSMUSP00000139881.2"/>
    <property type="gene ID" value="ENSMUSG00000036634.16"/>
</dbReference>
<dbReference type="GeneID" id="17136"/>
<dbReference type="KEGG" id="mmu:17136"/>
<dbReference type="UCSC" id="uc009ghb.1">
    <molecule id="P20917-2"/>
    <property type="organism name" value="mouse"/>
</dbReference>
<dbReference type="AGR" id="MGI:96912"/>
<dbReference type="CTD" id="4099"/>
<dbReference type="MGI" id="MGI:96912">
    <property type="gene designation" value="Mag"/>
</dbReference>
<dbReference type="VEuPathDB" id="HostDB:ENSMUSG00000036634"/>
<dbReference type="eggNOG" id="KOG4475">
    <property type="taxonomic scope" value="Eukaryota"/>
</dbReference>
<dbReference type="GeneTree" id="ENSGT01120000271890"/>
<dbReference type="HOGENOM" id="CLU_020480_1_0_1"/>
<dbReference type="InParanoid" id="P20917"/>
<dbReference type="OMA" id="IIAIVCY"/>
<dbReference type="OrthoDB" id="10012075at2759"/>
<dbReference type="PhylomeDB" id="P20917"/>
<dbReference type="TreeFam" id="TF332441"/>
<dbReference type="Reactome" id="R-MMU-193634">
    <property type="pathway name" value="Axonal growth inhibition (RHOA activation)"/>
</dbReference>
<dbReference type="Reactome" id="R-MMU-210991">
    <property type="pathway name" value="Basigin interactions"/>
</dbReference>
<dbReference type="BioGRID-ORCS" id="17136">
    <property type="hits" value="2 hits in 78 CRISPR screens"/>
</dbReference>
<dbReference type="CD-CODE" id="CE726F99">
    <property type="entry name" value="Postsynaptic density"/>
</dbReference>
<dbReference type="PRO" id="PR:P20917"/>
<dbReference type="Proteomes" id="UP000000589">
    <property type="component" value="Chromosome 7"/>
</dbReference>
<dbReference type="RNAct" id="P20917">
    <property type="molecule type" value="protein"/>
</dbReference>
<dbReference type="Bgee" id="ENSMUSG00000036634">
    <property type="expression patterns" value="Expressed in cerebellar nuclear complex and 110 other cell types or tissues"/>
</dbReference>
<dbReference type="ExpressionAtlas" id="P20917">
    <property type="expression patterns" value="baseline and differential"/>
</dbReference>
<dbReference type="GO" id="GO:0045121">
    <property type="term" value="C:membrane raft"/>
    <property type="evidence" value="ECO:0007669"/>
    <property type="project" value="UniProtKB-SubCell"/>
</dbReference>
<dbReference type="GO" id="GO:0097453">
    <property type="term" value="C:mesaxon"/>
    <property type="evidence" value="ECO:0007669"/>
    <property type="project" value="Ensembl"/>
</dbReference>
<dbReference type="GO" id="GO:0043209">
    <property type="term" value="C:myelin sheath"/>
    <property type="evidence" value="ECO:0000314"/>
    <property type="project" value="MGI"/>
</dbReference>
<dbReference type="GO" id="GO:0035749">
    <property type="term" value="C:myelin sheath adaxonal region"/>
    <property type="evidence" value="ECO:0000314"/>
    <property type="project" value="MGI"/>
</dbReference>
<dbReference type="GO" id="GO:0033270">
    <property type="term" value="C:paranode region of axon"/>
    <property type="evidence" value="ECO:0000314"/>
    <property type="project" value="BHF-UCL"/>
</dbReference>
<dbReference type="GO" id="GO:0005886">
    <property type="term" value="C:plasma membrane"/>
    <property type="evidence" value="ECO:0000314"/>
    <property type="project" value="UniProtKB"/>
</dbReference>
<dbReference type="GO" id="GO:0043220">
    <property type="term" value="C:Schmidt-Lanterman incisure"/>
    <property type="evidence" value="ECO:0000314"/>
    <property type="project" value="BHF-UCL"/>
</dbReference>
<dbReference type="GO" id="GO:0030246">
    <property type="term" value="F:carbohydrate binding"/>
    <property type="evidence" value="ECO:0007669"/>
    <property type="project" value="UniProtKB-KW"/>
</dbReference>
<dbReference type="GO" id="GO:1905576">
    <property type="term" value="F:ganglioside GT1b binding"/>
    <property type="evidence" value="ECO:0000315"/>
    <property type="project" value="UniProtKB"/>
</dbReference>
<dbReference type="GO" id="GO:0042803">
    <property type="term" value="F:protein homodimerization activity"/>
    <property type="evidence" value="ECO:0000353"/>
    <property type="project" value="UniProtKB"/>
</dbReference>
<dbReference type="GO" id="GO:0019901">
    <property type="term" value="F:protein kinase binding"/>
    <property type="evidence" value="ECO:0007669"/>
    <property type="project" value="Ensembl"/>
</dbReference>
<dbReference type="GO" id="GO:0033691">
    <property type="term" value="F:sialic acid binding"/>
    <property type="evidence" value="ECO:0000314"/>
    <property type="project" value="UniProtKB"/>
</dbReference>
<dbReference type="GO" id="GO:0005102">
    <property type="term" value="F:signaling receptor binding"/>
    <property type="evidence" value="ECO:0007669"/>
    <property type="project" value="Ensembl"/>
</dbReference>
<dbReference type="GO" id="GO:0031103">
    <property type="term" value="P:axon regeneration"/>
    <property type="evidence" value="ECO:0000316"/>
    <property type="project" value="MGI"/>
</dbReference>
<dbReference type="GO" id="GO:0007155">
    <property type="term" value="P:cell adhesion"/>
    <property type="evidence" value="ECO:0000250"/>
    <property type="project" value="UniProtKB"/>
</dbReference>
<dbReference type="GO" id="GO:0098742">
    <property type="term" value="P:cell-cell adhesion via plasma-membrane adhesion molecules"/>
    <property type="evidence" value="ECO:0000250"/>
    <property type="project" value="UniProtKB"/>
</dbReference>
<dbReference type="GO" id="GO:0071260">
    <property type="term" value="P:cellular response to mechanical stimulus"/>
    <property type="evidence" value="ECO:0007669"/>
    <property type="project" value="Ensembl"/>
</dbReference>
<dbReference type="GO" id="GO:0032289">
    <property type="term" value="P:central nervous system myelin formation"/>
    <property type="evidence" value="ECO:0000316"/>
    <property type="project" value="MGI"/>
</dbReference>
<dbReference type="GO" id="GO:0022010">
    <property type="term" value="P:central nervous system myelination"/>
    <property type="evidence" value="ECO:0000315"/>
    <property type="project" value="UniProtKB"/>
</dbReference>
<dbReference type="GO" id="GO:0042552">
    <property type="term" value="P:myelination"/>
    <property type="evidence" value="ECO:0000315"/>
    <property type="project" value="MGI"/>
</dbReference>
<dbReference type="GO" id="GO:0030517">
    <property type="term" value="P:negative regulation of axon extension"/>
    <property type="evidence" value="ECO:0000250"/>
    <property type="project" value="UniProtKB"/>
</dbReference>
<dbReference type="GO" id="GO:0043524">
    <property type="term" value="P:negative regulation of neuron apoptotic process"/>
    <property type="evidence" value="ECO:0000315"/>
    <property type="project" value="UniProtKB"/>
</dbReference>
<dbReference type="GO" id="GO:0045665">
    <property type="term" value="P:negative regulation of neuron differentiation"/>
    <property type="evidence" value="ECO:0007669"/>
    <property type="project" value="Ensembl"/>
</dbReference>
<dbReference type="GO" id="GO:0010977">
    <property type="term" value="P:negative regulation of neuron projection development"/>
    <property type="evidence" value="ECO:0000315"/>
    <property type="project" value="UniProtKB"/>
</dbReference>
<dbReference type="GO" id="GO:0048711">
    <property type="term" value="P:positive regulation of astrocyte differentiation"/>
    <property type="evidence" value="ECO:0007669"/>
    <property type="project" value="Ensembl"/>
</dbReference>
<dbReference type="GO" id="GO:0031643">
    <property type="term" value="P:positive regulation of myelination"/>
    <property type="evidence" value="ECO:0000315"/>
    <property type="project" value="CACAO"/>
</dbReference>
<dbReference type="GO" id="GO:0019226">
    <property type="term" value="P:transmission of nerve impulse"/>
    <property type="evidence" value="ECO:0000315"/>
    <property type="project" value="MGI"/>
</dbReference>
<dbReference type="CDD" id="cd00096">
    <property type="entry name" value="Ig"/>
    <property type="match status" value="1"/>
</dbReference>
<dbReference type="CDD" id="cd20987">
    <property type="entry name" value="IgC2_CD33_d2_like"/>
    <property type="match status" value="1"/>
</dbReference>
<dbReference type="CDD" id="cd05712">
    <property type="entry name" value="IgV_CD33"/>
    <property type="match status" value="1"/>
</dbReference>
<dbReference type="FunFam" id="2.60.40.10:FF:000475">
    <property type="entry name" value="myelin-associated glycoprotein isoform X1"/>
    <property type="match status" value="2"/>
</dbReference>
<dbReference type="FunFam" id="2.60.40.10:FF:000663">
    <property type="entry name" value="myelin-associated glycoprotein isoform X1"/>
    <property type="match status" value="1"/>
</dbReference>
<dbReference type="FunFam" id="2.60.40.10:FF:000743">
    <property type="entry name" value="myelin-associated glycoprotein isoform X1"/>
    <property type="match status" value="1"/>
</dbReference>
<dbReference type="Gene3D" id="2.60.40.10">
    <property type="entry name" value="Immunoglobulins"/>
    <property type="match status" value="4"/>
</dbReference>
<dbReference type="InterPro" id="IPR013162">
    <property type="entry name" value="CD80_C2-set"/>
</dbReference>
<dbReference type="InterPro" id="IPR007110">
    <property type="entry name" value="Ig-like_dom"/>
</dbReference>
<dbReference type="InterPro" id="IPR036179">
    <property type="entry name" value="Ig-like_dom_sf"/>
</dbReference>
<dbReference type="InterPro" id="IPR013783">
    <property type="entry name" value="Ig-like_fold"/>
</dbReference>
<dbReference type="InterPro" id="IPR003599">
    <property type="entry name" value="Ig_sub"/>
</dbReference>
<dbReference type="InterPro" id="IPR003598">
    <property type="entry name" value="Ig_sub2"/>
</dbReference>
<dbReference type="InterPro" id="IPR051036">
    <property type="entry name" value="SIGLEC"/>
</dbReference>
<dbReference type="PANTHER" id="PTHR12035:SF107">
    <property type="entry name" value="MYELIN-ASSOCIATED GLYCOPROTEIN"/>
    <property type="match status" value="1"/>
</dbReference>
<dbReference type="PANTHER" id="PTHR12035">
    <property type="entry name" value="SIALIC ACID BINDING IMMUNOGLOBULIN-LIKE LECTIN"/>
    <property type="match status" value="1"/>
</dbReference>
<dbReference type="Pfam" id="PF08205">
    <property type="entry name" value="C2-set_2"/>
    <property type="match status" value="1"/>
</dbReference>
<dbReference type="Pfam" id="PF13927">
    <property type="entry name" value="Ig_3"/>
    <property type="match status" value="2"/>
</dbReference>
<dbReference type="SMART" id="SM00409">
    <property type="entry name" value="IG"/>
    <property type="match status" value="4"/>
</dbReference>
<dbReference type="SMART" id="SM00408">
    <property type="entry name" value="IGc2"/>
    <property type="match status" value="2"/>
</dbReference>
<dbReference type="SUPFAM" id="SSF48726">
    <property type="entry name" value="Immunoglobulin"/>
    <property type="match status" value="4"/>
</dbReference>
<dbReference type="PROSITE" id="PS50835">
    <property type="entry name" value="IG_LIKE"/>
    <property type="match status" value="2"/>
</dbReference>
<comment type="function">
    <text evidence="1 4 5 7 9 10 13 14 15 16 17 18 19 20">Adhesion molecule that mediates interactions between myelinating cells and neurons by binding to neuronal sialic acid-containing gangliosides and to the glycoproteins RTN4R and RTN4RL2 (PubMed:12089450, PubMed:27922006, PubMed:7533044). Not required for initial myelination, but seems to play a role in the maintenance of normal axon myelination (PubMed:10625334, PubMed:7516497, PubMed:9262180, PubMed:9469574, PubMed:9482781, PubMed:9482783). Protects motoneurons against apoptosis, also after injury; protection against apoptosis is probably mediated via interaction with neuronal RTN4R and RTN4RL2 (PubMed:26335717). Required to prevent degeneration of myelinated axons in adults; this probably depends on binding to gangliosides on the axon cell membrane (PubMed:15953602, PubMed:19158290). Negative regulator of neurite outgrowth that inhibits axon longitudinal growth (PubMed:12089450, PubMed:19158290, PubMed:27922006). Negative regulator of neurite outgrowth; in dorsal root ganglion neurons the inhibition is mediated primarily via binding to neuronal RTN4R or RTN4RL2 and to a lesser degree via binding to neuronal gangliosides (PubMed:17640868). In cerebellar granule cells the inhibition is mediated via binding to neuronal gangliosides (PubMed:17640868). In sensory neurons, inhibition of neurite extension depends only partially on RTN4R, RTN4RL2 and gangliosides (By similarity). Inhibits axon outgrowth by binding to RTN4R (PubMed:12089450). Preferentially binds to alpha-2,3-linked sialic acid (PubMed:27922006, PubMed:7533044). Binds ganglioside Gt1b (PubMed:27922006).</text>
</comment>
<comment type="subunit">
    <text evidence="5 6 13 14">Monomer and homodimer (PubMed:27922006). Interacts (via the first three N-terminal Ig-like domains) with RTN4R and RTN4RL2 (PubMed:12089450, PubMed:26335717). Interacts with isoform 2 of BSG (PubMed:12558975).</text>
</comment>
<comment type="subcellular location">
    <subcellularLocation>
        <location evidence="16 20">Cell membrane</location>
        <topology evidence="16 20">Single-pass type I membrane protein</topology>
    </subcellularLocation>
    <subcellularLocation>
        <location evidence="1">Membrane raft</location>
    </subcellularLocation>
</comment>
<comment type="alternative products">
    <event type="alternative splicing"/>
    <isoform>
        <id>P20917-1</id>
        <name>L-MAG</name>
        <sequence type="displayed"/>
    </isoform>
    <isoform>
        <id>P20917-2</id>
        <name>S-MAG</name>
        <sequence type="described" ref="VSP_002527 VSP_002528"/>
    </isoform>
</comment>
<comment type="tissue specificity">
    <text evidence="4 8 11 12 15 20">Detected in the myelin tract in brain, especially in the corpus callosum and in peripheral nerve (PubMed:24191038, PubMed:7516497, PubMed:9482783). Expressed by myelinating glial cells in the central and peripheral nervous system (PubMed:10625334). Detected in oligodendrocyte processes before formation of compact myelin (PubMed:10625334, PubMed:2474006). Restricted to the periaxonal space after myelination (PubMed:10625334). Isoform S-MAG is the predominant isoform in CNS and PNS of the adult (at protein level) (PubMed:1716323).</text>
</comment>
<comment type="developmental stage">
    <text evidence="8">In CNS isoform L-MAG is the major form synthesized early in development, and it persists as a significant proportion of the MAG present in the adult. In the PNS isoform L-MAG is expressed at modest levels during development; it is absent in the adult.</text>
</comment>
<comment type="domain">
    <text evidence="20">The C-terminal cytoplasmic region found only in isoform L-MAG is required for normal myelination in the central nervous system (CNS), but is apparently not required for normal myelination in the peripheral nervous system (PNS).</text>
</comment>
<comment type="domain">
    <text evidence="1 10 13">The extracellular domain is required to protect against axon degeneration (PubMed:19158290, PubMed:26335717). The first three Ig-like domains mediate interaction with RTN4R and RTN4RL2, but are not sufficient to inhibit neurite outgrowth (By similarity). The two C-terminal extracellular Ig-like C2-type domains are required for inhibition of axon longitudinal growth. Besides, the two C-terminal extracellular Ig-like C2-type domains are required for protection against apoptosis after nerve injury (PubMed:26335717).</text>
</comment>
<comment type="PTM">
    <text evidence="8 14">N-glycosylated.</text>
</comment>
<comment type="PTM">
    <text evidence="1">Phosphorylated on tyrosine residues.</text>
</comment>
<comment type="PTM">
    <text evidence="11">Ubiquitinated, leading to proteasomal degradation.</text>
</comment>
<comment type="disruption phenotype">
    <text evidence="7 10 13 15 17 18 19">Mutant mice appear normal, excepting subtle defects in motor coordination and a slight intention tremor (PubMed:7516497). They have similar numbers of motoneurons as wild-type at birth, but display an important loss of motoneurons during the first week after birth (PubMed:26335717). Five month old mutant mice display a decreased ability to remain on a rotating cylinder (PubMed:15953602). Contrary to wild-type, about 40% of mutant mice have severe episodes of whole-body tremor, both during movement and when resting (PubMed:15953602). The myelination in brain and around peripheral nerves appears grossly normal in young animals, but the periaxonal cytoplasmic collar is often missing in optic nerve (PubMed:7516497, PubMed:9262180, PubMed:9469574, PubMed:9482781). When present, the cytoplasm of the periaxonal collar has generally a disorganized aspect (PubMed:7516497). Mutant mice have an increased percentage of unmyelinated axons in optic nerve (PubMed:9262180, PubMed:9469574). Besides, a small proportion of nerves from mutant mice display redundant myelination, and also rare cases of multiple myelination, where axons are surrounded by two or more compact myelin sheets (PubMed:9469574). Sciatic nerves from over three month old mutant mice show signs of Wallerian degeneration, with redundant myelin, degeneration of myelinated fibers, and an apparent decrease in the diameter of myelinated axons (PubMed:15953602, PubMed:9482781). The distances between neurofilaments in myelinated axons from over 3 month old mice are shorter than normal (PubMed:15953602, PubMed:9482781). With increasing age, mutant mice display progressive axon degeneration in the spinal cord and sciatic nerve, resulting in a decrease of 28% in the number of spinal cord axons after 15 months (PubMed:19158290). Mutant mice display increased motoneuron apoptosis after injury (PubMed:26335717). Likewise, they display strongly increased axon degeneration after treatment with the neurotoxin acrylamide (PubMed:19158290). Mutant mice display much more severe axon loss in response to experimental autoimmune encephalitis (PubMed:19158290).</text>
</comment>
<comment type="similarity">
    <text evidence="21">Belongs to the immunoglobulin superfamily. SIGLEC (sialic acid binding Ig-like lectin) family.</text>
</comment>
<comment type="online information" name="Functional Glycomics Gateway - Glycan Binding">
    <link uri="http://www.functionalglycomics.org/glycomics/GBPServlet?&amp;operationType=view&amp;cbpId=cbp_mou_Itlect_196"/>
    <text>Siglec-4</text>
</comment>
<comment type="online information" name="Functional Glycomics Gateway - Glycan Binding">
    <link uri="http://www.functionalglycomics.org/glycomics/GBPServlet?&amp;operationType=view&amp;cbpId=cbp_mou_Itlect_00003"/>
    <text>Siglec-4a [3 Fc Domains]</text>
</comment>
<protein>
    <recommendedName>
        <fullName>Myelin-associated glycoprotein</fullName>
    </recommendedName>
    <alternativeName>
        <fullName>Siglec-4a</fullName>
    </alternativeName>
</protein>
<accession>P20917</accession>
<accession>A0A087WPR1</accession>
<accession>P16880</accession>
<keyword id="KW-0002">3D-structure</keyword>
<keyword id="KW-0025">Alternative splicing</keyword>
<keyword id="KW-0130">Cell adhesion</keyword>
<keyword id="KW-1003">Cell membrane</keyword>
<keyword id="KW-0903">Direct protein sequencing</keyword>
<keyword id="KW-1015">Disulfide bond</keyword>
<keyword id="KW-0325">Glycoprotein</keyword>
<keyword id="KW-0393">Immunoglobulin domain</keyword>
<keyword id="KW-0430">Lectin</keyword>
<keyword id="KW-0446">Lipid-binding</keyword>
<keyword id="KW-0449">Lipoprotein</keyword>
<keyword id="KW-0472">Membrane</keyword>
<keyword id="KW-0564">Palmitate</keyword>
<keyword id="KW-0597">Phosphoprotein</keyword>
<keyword id="KW-1185">Reference proteome</keyword>
<keyword id="KW-0677">Repeat</keyword>
<keyword id="KW-0732">Signal</keyword>
<keyword id="KW-0812">Transmembrane</keyword>
<keyword id="KW-1133">Transmembrane helix</keyword>
<keyword id="KW-0832">Ubl conjugation</keyword>
<organism>
    <name type="scientific">Mus musculus</name>
    <name type="common">Mouse</name>
    <dbReference type="NCBI Taxonomy" id="10090"/>
    <lineage>
        <taxon>Eukaryota</taxon>
        <taxon>Metazoa</taxon>
        <taxon>Chordata</taxon>
        <taxon>Craniata</taxon>
        <taxon>Vertebrata</taxon>
        <taxon>Euteleostomi</taxon>
        <taxon>Mammalia</taxon>
        <taxon>Eutheria</taxon>
        <taxon>Euarchontoglires</taxon>
        <taxon>Glires</taxon>
        <taxon>Rodentia</taxon>
        <taxon>Myomorpha</taxon>
        <taxon>Muroidea</taxon>
        <taxon>Muridae</taxon>
        <taxon>Murinae</taxon>
        <taxon>Mus</taxon>
        <taxon>Mus</taxon>
    </lineage>
</organism>
<reference key="1">
    <citation type="journal article" date="1989" name="Biochem. Biophys. Res. Commun.">
        <title>cDNA cloning of mouse myelin-associated glycoprotein: a novel alternative splicing pattern.</title>
        <authorList>
            <person name="Fujita N."/>
            <person name="Sato S."/>
            <person name="Kurihara T."/>
            <person name="Kuwano R."/>
            <person name="Sakimura K."/>
            <person name="Inuzuka T."/>
            <person name="Takahashi Y."/>
            <person name="Miyatake T."/>
        </authorList>
    </citation>
    <scope>NUCLEOTIDE SEQUENCE [MRNA] (ISOFORMS L-MAG AND S-MAG)</scope>
</reference>
<reference key="2">
    <citation type="journal article" date="1991" name="Biochem. Biophys. Res. Commun.">
        <title>Structure of mouse myelin-associated glycoprotein gene.</title>
        <authorList>
            <person name="Nakano R."/>
            <person name="Fujita N."/>
            <person name="Sato S."/>
            <person name="Inuzuka T."/>
            <person name="Sakimura K."/>
            <person name="Ishiguro H."/>
            <person name="Mishina M."/>
            <person name="Miyatake T."/>
        </authorList>
    </citation>
    <scope>NUCLEOTIDE SEQUENCE [GENOMIC DNA] (ISOFORM S-MAG)</scope>
    <source>
        <tissue>Brain</tissue>
    </source>
</reference>
<reference evidence="22" key="3">
    <citation type="journal article" date="2009" name="PLoS Biol.">
        <title>Lineage-specific biology revealed by a finished genome assembly of the mouse.</title>
        <authorList>
            <person name="Church D.M."/>
            <person name="Goodstadt L."/>
            <person name="Hillier L.W."/>
            <person name="Zody M.C."/>
            <person name="Goldstein S."/>
            <person name="She X."/>
            <person name="Bult C.J."/>
            <person name="Agarwala R."/>
            <person name="Cherry J.L."/>
            <person name="DiCuccio M."/>
            <person name="Hlavina W."/>
            <person name="Kapustin Y."/>
            <person name="Meric P."/>
            <person name="Maglott D."/>
            <person name="Birtle Z."/>
            <person name="Marques A.C."/>
            <person name="Graves T."/>
            <person name="Zhou S."/>
            <person name="Teague B."/>
            <person name="Potamousis K."/>
            <person name="Churas C."/>
            <person name="Place M."/>
            <person name="Herschleb J."/>
            <person name="Runnheim R."/>
            <person name="Forrest D."/>
            <person name="Amos-Landgraf J."/>
            <person name="Schwartz D.C."/>
            <person name="Cheng Z."/>
            <person name="Lindblad-Toh K."/>
            <person name="Eichler E.E."/>
            <person name="Ponting C.P."/>
        </authorList>
    </citation>
    <scope>NUCLEOTIDE SEQUENCE [LARGE SCALE GENOMIC DNA]</scope>
    <source>
        <strain evidence="22">C57BL/6J</strain>
    </source>
</reference>
<reference key="4">
    <citation type="submission" date="2007-04" db="UniProtKB">
        <authorList>
            <person name="Lubec G."/>
            <person name="Kang S.U."/>
        </authorList>
    </citation>
    <scope>PROTEIN SEQUENCE OF 78-88 AND 466-477</scope>
    <scope>IDENTIFICATION BY MASS SPECTROMETRY</scope>
    <source>
        <strain>C57BL/6J</strain>
        <tissue>Brain</tissue>
    </source>
</reference>
<reference key="5">
    <citation type="journal article" date="1989" name="J. Comp. Neurol.">
        <title>Immunohistological localization of the adhesion molecules L1, N-CAM, and MAG in the developing and adult optic nerve of mice.</title>
        <authorList>
            <person name="Bartsch U."/>
            <person name="Kirchhoff F."/>
            <person name="Schachner M."/>
        </authorList>
    </citation>
    <scope>TISSUE SPECIFICITY</scope>
</reference>
<reference key="6">
    <citation type="journal article" date="1991" name="J. Neurosci. Res.">
        <title>Differential expression of MAG isoforms during development.</title>
        <authorList>
            <person name="Pedraza L."/>
            <person name="Frey A.B."/>
            <person name="Hempstead B.L."/>
            <person name="Colman D.R."/>
            <person name="Salzer J.L."/>
        </authorList>
    </citation>
    <scope>TISSUE SPECIFICITY</scope>
    <scope>DEVELOPMENTAL STAGE</scope>
    <scope>GLYCOSYLATION</scope>
</reference>
<reference key="7">
    <citation type="journal article" date="1994" name="Curr. Biol.">
        <title>Sialoadhesin, myelin-associated glycoprotein and CD22 define a new family of sialic acid-dependent adhesion molecules of the immunoglobulin superfamily.</title>
        <authorList>
            <person name="Kelm S."/>
            <person name="Pelz A."/>
            <person name="Schauer R."/>
            <person name="Filbin M.T."/>
            <person name="Tang S."/>
            <person name="de Bellard M.E."/>
            <person name="Schnaar R.L."/>
            <person name="Mahoney J.A."/>
            <person name="Hartnell A."/>
            <person name="Bradfield P."/>
            <person name="Crocker P.R."/>
        </authorList>
    </citation>
    <scope>FUNCTION</scope>
    <scope>SIALIC ACID-BINDING</scope>
    <scope>SUBCELLULAR LOCATION</scope>
    <scope>TOPOLOGY</scope>
</reference>
<reference key="8">
    <citation type="journal article" date="1994" name="Nature">
        <title>Myelination in the absence of myelin-associated glycoprotein.</title>
        <authorList>
            <person name="Li C."/>
            <person name="Tropak M.B."/>
            <person name="Gerlai R."/>
            <person name="Clapoff S."/>
            <person name="Abramow-Newerly W."/>
            <person name="Trapp B."/>
            <person name="Peterson A."/>
            <person name="Roder J."/>
        </authorList>
    </citation>
    <scope>DISRUPTION PHENOTYPE</scope>
    <scope>FUNCTION</scope>
    <scope>TISSUE SPECIFICITY</scope>
</reference>
<reference key="9">
    <citation type="journal article" date="1997" name="Brain Res.">
        <title>Increased number of unmyelinated axons in optic nerves of adult mice deficient in the myelin-associated glycoprotein (MAG).</title>
        <authorList>
            <person name="Bartsch S."/>
            <person name="Montag D."/>
            <person name="Schachner M."/>
            <person name="Bartsch U."/>
        </authorList>
    </citation>
    <scope>DISRUPTION PHENOTYPE</scope>
    <scope>FUNCTION</scope>
</reference>
<reference key="10">
    <citation type="journal article" date="1998" name="J. Neurosci.">
        <title>Myelin-associated glycoprotein is a myelin signal that modulates the caliber of myelinated axons.</title>
        <authorList>
            <person name="Yin X."/>
            <person name="Crawford T.O."/>
            <person name="Griffin J.W."/>
            <person name="Tu P.-H."/>
            <person name="Lee V.M."/>
            <person name="Li C."/>
            <person name="Roder J."/>
            <person name="Trapp B.D."/>
        </authorList>
    </citation>
    <scope>DISRUPTION PHENOTYPE</scope>
    <scope>FUNCTION</scope>
</reference>
<reference key="11">
    <citation type="journal article" date="1998" name="J. Neurosci.">
        <title>The cytoplasmic domain of the large myelin-associated glycoprotein isoform is needed for proper CNS but not peripheral nervous system myelination.</title>
        <authorList>
            <person name="Fujita N."/>
            <person name="Kemper A."/>
            <person name="Dupree J."/>
            <person name="Nakayasu H."/>
            <person name="Bartsch U."/>
            <person name="Schachner M."/>
            <person name="Maeda N."/>
            <person name="Suzuki K."/>
            <person name="Popko B."/>
        </authorList>
    </citation>
    <scope>FUNCTION (ISOFORM L-MAG)</scope>
    <scope>TISSUE SPECIFICITY</scope>
    <scope>SUBCELLULAR LOCATION</scope>
    <scope>TOPOLOGY</scope>
    <scope>DOMAIN</scope>
</reference>
<reference key="12">
    <citation type="journal article" date="1998" name="J. Neurosci. Res.">
        <title>Myelin associated glycoprotein modulates glia-axon contact in vivo.</title>
        <authorList>
            <person name="Li C."/>
            <person name="Trapp B."/>
            <person name="Ludwin S."/>
            <person name="Peterson A."/>
            <person name="Roder J."/>
        </authorList>
    </citation>
    <scope>DISRUPTION PHENOTYPE</scope>
    <scope>FUNCTION</scope>
</reference>
<reference key="13">
    <citation type="journal article" date="2000" name="Glia">
        <title>Multiple functions of the myelin-associated glycoprotein MAG (siglec-4a) in formation and maintenance of myelin.</title>
        <authorList>
            <person name="Schachner M."/>
            <person name="Bartsch U."/>
        </authorList>
    </citation>
    <scope>FUNCTION</scope>
    <scope>TISSUE SPECIFICITY</scope>
</reference>
<reference key="14">
    <citation type="journal article" date="2002" name="Science">
        <title>Myelin-associated glycoprotein as a functional ligand for the Nogo-66 receptor.</title>
        <authorList>
            <person name="Liu B.P."/>
            <person name="Fournier A."/>
            <person name="GrandPre T."/>
            <person name="Strittmatter S.M."/>
        </authorList>
    </citation>
    <scope>FUNCTION</scope>
    <scope>INTERACTION WITH RTN4R</scope>
</reference>
<reference key="15">
    <citation type="journal article" date="2003" name="J. Neurochem.">
        <title>The immunoglobulin-superfamily molecule basigin is a binding protein for oligomannosidic carbohydrates: an anti-idiotypic approach.</title>
        <authorList>
            <person name="Heller M."/>
            <person name="von der Ohe M."/>
            <person name="Kleene R."/>
            <person name="Mohajeri M.H."/>
            <person name="Schachner M."/>
        </authorList>
    </citation>
    <scope>INTERACTION WITH BSG</scope>
</reference>
<reference key="16">
    <citation type="journal article" date="2005" name="Exp. Neurol.">
        <title>Myelin-associated glycoprotein and complementary axonal ligands, gangliosides, mediate axon stability in the CNS and PNS: neuropathology and behavioral deficits in single- and double-null mice.</title>
        <authorList>
            <person name="Pan B."/>
            <person name="Fromholt S.E."/>
            <person name="Hess E.J."/>
            <person name="Crawford T.O."/>
            <person name="Griffin J.W."/>
            <person name="Sheikh K.A."/>
            <person name="Schnaar R.L."/>
        </authorList>
    </citation>
    <scope>DISRUPTION PHENOTYPE</scope>
    <scope>FUNCTION</scope>
</reference>
<reference key="17">
    <citation type="journal article" date="2007" name="J. Biol. Chem.">
        <title>Gangliosides and Nogo receptors independently mediate myelin-associated glycoprotein inhibition of neurite outgrowth in different nerve cells.</title>
        <authorList>
            <person name="Mehta N.R."/>
            <person name="Lopez P.H."/>
            <person name="Vyas A.A."/>
            <person name="Schnaar R.L."/>
        </authorList>
    </citation>
    <scope>FUNCTION</scope>
</reference>
<reference key="18">
    <citation type="journal article" date="2009" name="J. Neurosci.">
        <title>Axonal protective effects of the myelin-associated glycoprotein.</title>
        <authorList>
            <person name="Nguyen T."/>
            <person name="Mehta N.R."/>
            <person name="Conant K."/>
            <person name="Kim K.J."/>
            <person name="Jones M."/>
            <person name="Calabresi P.A."/>
            <person name="Melli G."/>
            <person name="Hoke A."/>
            <person name="Schnaar R.L."/>
            <person name="Ming G.L."/>
            <person name="Song H."/>
            <person name="Keswani S.C."/>
            <person name="Griffin J.W."/>
        </authorList>
    </citation>
    <scope>DISRUPTION PHENOTYPE</scope>
    <scope>FUNCTION</scope>
    <scope>DOMAIN</scope>
    <scope>MUTAGENESIS OF 118-ARG--ASP-120</scope>
</reference>
<reference key="19">
    <citation type="journal article" date="2010" name="Cell">
        <title>A tissue-specific atlas of mouse protein phosphorylation and expression.</title>
        <authorList>
            <person name="Huttlin E.L."/>
            <person name="Jedrychowski M.P."/>
            <person name="Elias J.E."/>
            <person name="Goswami T."/>
            <person name="Rad R."/>
            <person name="Beausoleil S.A."/>
            <person name="Villen J."/>
            <person name="Haas W."/>
            <person name="Sowa M.E."/>
            <person name="Gygi S.P."/>
        </authorList>
    </citation>
    <scope>PHOSPHORYLATION [LARGE SCALE ANALYSIS] AT SER-591</scope>
    <scope>IDENTIFICATION BY MASS SPECTROMETRY [LARGE SCALE ANALYSIS]</scope>
    <source>
        <tissue>Brain</tissue>
    </source>
</reference>
<reference key="20">
    <citation type="journal article" date="2013" name="Proc. Natl. Acad. Sci. U.S.A.">
        <title>Very large G protein-coupled receptor 1 regulates myelin-associated glycoprotein via Galphas/Galphaq-mediated protein kinases A/C.</title>
        <authorList>
            <person name="Shin D."/>
            <person name="Lin S.T."/>
            <person name="Fu Y.H."/>
            <person name="Ptacek L.J."/>
        </authorList>
    </citation>
    <scope>TISSUE SPECIFICITY</scope>
    <scope>UBIQUITINATION</scope>
</reference>
<reference key="21">
    <citation type="journal article" date="2015" name="Cell Death Dis.">
        <title>Myelin-associated glycoprotein modulates apoptosis of motoneurons during early postnatal development via NgR/p75(NTR) receptor-mediated activation of RhoA signaling pathways.</title>
        <authorList>
            <person name="Palandri A."/>
            <person name="Salvador V.R."/>
            <person name="Wojnacki J."/>
            <person name="Vivinetto A.L."/>
            <person name="Schnaar R.L."/>
            <person name="Lopez P.H."/>
        </authorList>
    </citation>
    <scope>DISRUPTION PHENOTYPE</scope>
    <scope>FUNCTION</scope>
    <scope>DOMAIN</scope>
    <scope>INTERACTION WITH RTN4R AND RTN4RL2</scope>
</reference>
<reference key="22">
    <citation type="journal article" date="2016" name="Nat. Commun.">
        <title>Structural basis of myelin-associated glycoprotein adhesion and signalling.</title>
        <authorList>
            <person name="Pronker M.F."/>
            <person name="Lemstra S."/>
            <person name="Snijder J."/>
            <person name="Heck A.J."/>
            <person name="Thies-Weesie D.M."/>
            <person name="Pasterkamp R.J."/>
            <person name="Janssen B.J."/>
        </authorList>
    </citation>
    <scope>X-RAY CRYSTALLOGRAPHY (2.12 ANGSTROMS) OF 20-325</scope>
    <scope>X-RAY CRYSTALLOGRAPHY (3.80 ANGSTROMS) OF 20-508 IN COMPLEX WITH N-ACETYLNEURAMINYL-N-ACETYLLACTOSAMINE</scope>
    <scope>FUNCTION</scope>
    <scope>DISULFIDE BONDS</scope>
    <scope>GLYCOSYLATION AT TRP-22; ASN-99; ASN-223; ASN-246; ASN-315; ASN-332; ASN-406; ASN-450 AND ASN-454</scope>
    <scope>IDENTIFICATION BY MASS SPECTROMETRY</scope>
    <scope>SUBUNIT</scope>
    <scope>MUTAGENESIS OF TRP-25; TYR-65; ARG-118; TYR-127; THR-128; ASN-406 AND ILE-473</scope>
</reference>